<organism>
    <name type="scientific">Serratia proteamaculans (strain 568)</name>
    <dbReference type="NCBI Taxonomy" id="399741"/>
    <lineage>
        <taxon>Bacteria</taxon>
        <taxon>Pseudomonadati</taxon>
        <taxon>Pseudomonadota</taxon>
        <taxon>Gammaproteobacteria</taxon>
        <taxon>Enterobacterales</taxon>
        <taxon>Yersiniaceae</taxon>
        <taxon>Serratia</taxon>
    </lineage>
</organism>
<accession>A8GE01</accession>
<dbReference type="EC" id="7.-.-.-" evidence="1"/>
<dbReference type="EMBL" id="CP000826">
    <property type="protein sequence ID" value="ABV41341.1"/>
    <property type="molecule type" value="Genomic_DNA"/>
</dbReference>
<dbReference type="SMR" id="A8GE01"/>
<dbReference type="STRING" id="399741.Spro_2240"/>
<dbReference type="KEGG" id="spe:Spro_2240"/>
<dbReference type="eggNOG" id="COG2878">
    <property type="taxonomic scope" value="Bacteria"/>
</dbReference>
<dbReference type="HOGENOM" id="CLU_063448_2_0_6"/>
<dbReference type="OrthoDB" id="9789936at2"/>
<dbReference type="GO" id="GO:0005886">
    <property type="term" value="C:plasma membrane"/>
    <property type="evidence" value="ECO:0007669"/>
    <property type="project" value="UniProtKB-SubCell"/>
</dbReference>
<dbReference type="GO" id="GO:0051539">
    <property type="term" value="F:4 iron, 4 sulfur cluster binding"/>
    <property type="evidence" value="ECO:0007669"/>
    <property type="project" value="UniProtKB-UniRule"/>
</dbReference>
<dbReference type="GO" id="GO:0009055">
    <property type="term" value="F:electron transfer activity"/>
    <property type="evidence" value="ECO:0007669"/>
    <property type="project" value="InterPro"/>
</dbReference>
<dbReference type="GO" id="GO:0046872">
    <property type="term" value="F:metal ion binding"/>
    <property type="evidence" value="ECO:0007669"/>
    <property type="project" value="UniProtKB-KW"/>
</dbReference>
<dbReference type="GO" id="GO:0022900">
    <property type="term" value="P:electron transport chain"/>
    <property type="evidence" value="ECO:0007669"/>
    <property type="project" value="UniProtKB-UniRule"/>
</dbReference>
<dbReference type="FunFam" id="1.10.15.40:FF:000001">
    <property type="entry name" value="Ion-translocating oxidoreductase complex subunit B"/>
    <property type="match status" value="1"/>
</dbReference>
<dbReference type="Gene3D" id="3.30.70.20">
    <property type="match status" value="1"/>
</dbReference>
<dbReference type="Gene3D" id="1.10.15.40">
    <property type="entry name" value="Electron transport complex subunit B, putative Fe-S cluster"/>
    <property type="match status" value="1"/>
</dbReference>
<dbReference type="HAMAP" id="MF_00463">
    <property type="entry name" value="RsxB_RnfB"/>
    <property type="match status" value="1"/>
</dbReference>
<dbReference type="InterPro" id="IPR007202">
    <property type="entry name" value="4Fe-4S_dom"/>
</dbReference>
<dbReference type="InterPro" id="IPR017896">
    <property type="entry name" value="4Fe4S_Fe-S-bd"/>
</dbReference>
<dbReference type="InterPro" id="IPR017900">
    <property type="entry name" value="4Fe4S_Fe_S_CS"/>
</dbReference>
<dbReference type="InterPro" id="IPR050395">
    <property type="entry name" value="4Fe4S_Ferredoxin_RnfB"/>
</dbReference>
<dbReference type="InterPro" id="IPR010207">
    <property type="entry name" value="Elect_transpt_cplx_RnfB/RsxB"/>
</dbReference>
<dbReference type="InterPro" id="IPR016463">
    <property type="entry name" value="RnfB/RsxB_Proteobac"/>
</dbReference>
<dbReference type="NCBIfam" id="NF003475">
    <property type="entry name" value="PRK05113.1"/>
    <property type="match status" value="1"/>
</dbReference>
<dbReference type="NCBIfam" id="TIGR01944">
    <property type="entry name" value="rnfB"/>
    <property type="match status" value="1"/>
</dbReference>
<dbReference type="PANTHER" id="PTHR43560">
    <property type="entry name" value="ION-TRANSLOCATING OXIDOREDUCTASE COMPLEX SUBUNIT B"/>
    <property type="match status" value="1"/>
</dbReference>
<dbReference type="PANTHER" id="PTHR43560:SF1">
    <property type="entry name" value="ION-TRANSLOCATING OXIDOREDUCTASE COMPLEX SUBUNIT B"/>
    <property type="match status" value="1"/>
</dbReference>
<dbReference type="Pfam" id="PF14697">
    <property type="entry name" value="Fer4_21"/>
    <property type="match status" value="1"/>
</dbReference>
<dbReference type="Pfam" id="PF04060">
    <property type="entry name" value="FeS"/>
    <property type="match status" value="1"/>
</dbReference>
<dbReference type="PIRSF" id="PIRSF005784">
    <property type="entry name" value="Elect_transpt_RnfB"/>
    <property type="match status" value="1"/>
</dbReference>
<dbReference type="SUPFAM" id="SSF54862">
    <property type="entry name" value="4Fe-4S ferredoxins"/>
    <property type="match status" value="1"/>
</dbReference>
<dbReference type="PROSITE" id="PS51656">
    <property type="entry name" value="4FE4S"/>
    <property type="match status" value="1"/>
</dbReference>
<dbReference type="PROSITE" id="PS00198">
    <property type="entry name" value="4FE4S_FER_1"/>
    <property type="match status" value="2"/>
</dbReference>
<dbReference type="PROSITE" id="PS51379">
    <property type="entry name" value="4FE4S_FER_2"/>
    <property type="match status" value="2"/>
</dbReference>
<feature type="chain" id="PRO_1000060350" description="Ion-translocating oxidoreductase complex subunit B">
    <location>
        <begin position="1"/>
        <end position="190"/>
    </location>
</feature>
<feature type="domain" description="4Fe-4S" evidence="1">
    <location>
        <begin position="32"/>
        <end position="90"/>
    </location>
</feature>
<feature type="domain" description="4Fe-4S ferredoxin-type 1" evidence="1">
    <location>
        <begin position="106"/>
        <end position="135"/>
    </location>
</feature>
<feature type="domain" description="4Fe-4S ferredoxin-type 2" evidence="1">
    <location>
        <begin position="136"/>
        <end position="165"/>
    </location>
</feature>
<feature type="region of interest" description="Hydrophobic" evidence="1">
    <location>
        <begin position="1"/>
        <end position="26"/>
    </location>
</feature>
<feature type="binding site" evidence="1">
    <location>
        <position position="49"/>
    </location>
    <ligand>
        <name>[4Fe-4S] cluster</name>
        <dbReference type="ChEBI" id="CHEBI:49883"/>
        <label>1</label>
    </ligand>
</feature>
<feature type="binding site" evidence="1">
    <location>
        <position position="52"/>
    </location>
    <ligand>
        <name>[4Fe-4S] cluster</name>
        <dbReference type="ChEBI" id="CHEBI:49883"/>
        <label>1</label>
    </ligand>
</feature>
<feature type="binding site" evidence="1">
    <location>
        <position position="57"/>
    </location>
    <ligand>
        <name>[4Fe-4S] cluster</name>
        <dbReference type="ChEBI" id="CHEBI:49883"/>
        <label>1</label>
    </ligand>
</feature>
<feature type="binding site" evidence="1">
    <location>
        <position position="73"/>
    </location>
    <ligand>
        <name>[4Fe-4S] cluster</name>
        <dbReference type="ChEBI" id="CHEBI:49883"/>
        <label>1</label>
    </ligand>
</feature>
<feature type="binding site" evidence="1">
    <location>
        <position position="115"/>
    </location>
    <ligand>
        <name>[4Fe-4S] cluster</name>
        <dbReference type="ChEBI" id="CHEBI:49883"/>
        <label>2</label>
    </ligand>
</feature>
<feature type="binding site" evidence="1">
    <location>
        <position position="118"/>
    </location>
    <ligand>
        <name>[4Fe-4S] cluster</name>
        <dbReference type="ChEBI" id="CHEBI:49883"/>
        <label>2</label>
    </ligand>
</feature>
<feature type="binding site" evidence="1">
    <location>
        <position position="121"/>
    </location>
    <ligand>
        <name>[4Fe-4S] cluster</name>
        <dbReference type="ChEBI" id="CHEBI:49883"/>
        <label>2</label>
    </ligand>
</feature>
<feature type="binding site" evidence="1">
    <location>
        <position position="125"/>
    </location>
    <ligand>
        <name>[4Fe-4S] cluster</name>
        <dbReference type="ChEBI" id="CHEBI:49883"/>
        <label>3</label>
    </ligand>
</feature>
<feature type="binding site" evidence="1">
    <location>
        <position position="145"/>
    </location>
    <ligand>
        <name>[4Fe-4S] cluster</name>
        <dbReference type="ChEBI" id="CHEBI:49883"/>
        <label>3</label>
    </ligand>
</feature>
<feature type="binding site" evidence="1">
    <location>
        <position position="148"/>
    </location>
    <ligand>
        <name>[4Fe-4S] cluster</name>
        <dbReference type="ChEBI" id="CHEBI:49883"/>
        <label>3</label>
    </ligand>
</feature>
<feature type="binding site" evidence="1">
    <location>
        <position position="151"/>
    </location>
    <ligand>
        <name>[4Fe-4S] cluster</name>
        <dbReference type="ChEBI" id="CHEBI:49883"/>
        <label>3</label>
    </ligand>
</feature>
<feature type="binding site" evidence="1">
    <location>
        <position position="155"/>
    </location>
    <ligand>
        <name>[4Fe-4S] cluster</name>
        <dbReference type="ChEBI" id="CHEBI:49883"/>
        <label>2</label>
    </ligand>
</feature>
<name>RNFB_SERP5</name>
<evidence type="ECO:0000255" key="1">
    <source>
        <dbReference type="HAMAP-Rule" id="MF_00463"/>
    </source>
</evidence>
<sequence>MTALWIAIAALSALGLLFGLVLGYAARRFEVEEDPVAEQVDEILPQSQCGQCGYPGCRPYAEAVANGEMINKCAPGGEQVMLKLAELLNVEPQPLGSEAAAEPVRQVAYIDEANCIGCTKCIQACPVDAIVGATRAMHTVITDLCTGCDLCVAPCPTDCIEMRPVATTTANWKWDMKTIPVQVIHVEQHA</sequence>
<gene>
    <name evidence="1" type="primary">rnfB</name>
    <name type="ordered locus">Spro_2240</name>
</gene>
<proteinExistence type="inferred from homology"/>
<keyword id="KW-0004">4Fe-4S</keyword>
<keyword id="KW-0997">Cell inner membrane</keyword>
<keyword id="KW-1003">Cell membrane</keyword>
<keyword id="KW-0249">Electron transport</keyword>
<keyword id="KW-0408">Iron</keyword>
<keyword id="KW-0411">Iron-sulfur</keyword>
<keyword id="KW-0472">Membrane</keyword>
<keyword id="KW-0479">Metal-binding</keyword>
<keyword id="KW-0677">Repeat</keyword>
<keyword id="KW-1278">Translocase</keyword>
<keyword id="KW-0813">Transport</keyword>
<protein>
    <recommendedName>
        <fullName evidence="1">Ion-translocating oxidoreductase complex subunit B</fullName>
        <ecNumber evidence="1">7.-.-.-</ecNumber>
    </recommendedName>
    <alternativeName>
        <fullName evidence="1">Rnf electron transport complex subunit B</fullName>
    </alternativeName>
</protein>
<comment type="function">
    <text evidence="1">Part of a membrane-bound complex that couples electron transfer with translocation of ions across the membrane.</text>
</comment>
<comment type="cofactor">
    <cofactor evidence="1">
        <name>[4Fe-4S] cluster</name>
        <dbReference type="ChEBI" id="CHEBI:49883"/>
    </cofactor>
    <text evidence="1">Binds 3 [4Fe-4S] clusters.</text>
</comment>
<comment type="subunit">
    <text evidence="1">The complex is composed of six subunits: RnfA, RnfB, RnfC, RnfD, RnfE and RnfG.</text>
</comment>
<comment type="subcellular location">
    <subcellularLocation>
        <location evidence="1">Cell inner membrane</location>
    </subcellularLocation>
</comment>
<comment type="similarity">
    <text evidence="1">Belongs to the 4Fe4S bacterial-type ferredoxin family. RnfB subfamily.</text>
</comment>
<reference key="1">
    <citation type="submission" date="2007-09" db="EMBL/GenBank/DDBJ databases">
        <title>Complete sequence of chromosome of Serratia proteamaculans 568.</title>
        <authorList>
            <consortium name="US DOE Joint Genome Institute"/>
            <person name="Copeland A."/>
            <person name="Lucas S."/>
            <person name="Lapidus A."/>
            <person name="Barry K."/>
            <person name="Glavina del Rio T."/>
            <person name="Dalin E."/>
            <person name="Tice H."/>
            <person name="Pitluck S."/>
            <person name="Chain P."/>
            <person name="Malfatti S."/>
            <person name="Shin M."/>
            <person name="Vergez L."/>
            <person name="Schmutz J."/>
            <person name="Larimer F."/>
            <person name="Land M."/>
            <person name="Hauser L."/>
            <person name="Kyrpides N."/>
            <person name="Kim E."/>
            <person name="Taghavi S."/>
            <person name="Newman L."/>
            <person name="Vangronsveld J."/>
            <person name="van der Lelie D."/>
            <person name="Richardson P."/>
        </authorList>
    </citation>
    <scope>NUCLEOTIDE SEQUENCE [LARGE SCALE GENOMIC DNA]</scope>
    <source>
        <strain>568</strain>
    </source>
</reference>